<comment type="function">
    <text evidence="1">Nucleotide-binding protein.</text>
</comment>
<comment type="similarity">
    <text evidence="1">Belongs to the YajQ family.</text>
</comment>
<keyword id="KW-0547">Nucleotide-binding</keyword>
<gene>
    <name type="ordered locus">VS_1405</name>
</gene>
<evidence type="ECO:0000255" key="1">
    <source>
        <dbReference type="HAMAP-Rule" id="MF_00632"/>
    </source>
</evidence>
<name>Y1405_VIBA3</name>
<proteinExistence type="inferred from homology"/>
<sequence>MPSFDIISEVEAVELRNAVDNANRELSTRFDFRGVEASFDYKDESVKLTAQDDFQLKQMRDILRSNLTKRNVDPNAMEAKAADQTGRTWHQTVIFKQGIETDVAKKIVKLIKDNKVKVQASIQGDKVRVTGKKRDDLQAVMALVRSGELGQPFQFDNFRD</sequence>
<protein>
    <recommendedName>
        <fullName evidence="1">Nucleotide-binding protein VS_1405</fullName>
    </recommendedName>
</protein>
<reference key="1">
    <citation type="submission" date="2009-02" db="EMBL/GenBank/DDBJ databases">
        <title>Vibrio splendidus str. LGP32 complete genome.</title>
        <authorList>
            <person name="Mazel D."/>
            <person name="Le Roux F."/>
        </authorList>
    </citation>
    <scope>NUCLEOTIDE SEQUENCE [LARGE SCALE GENOMIC DNA]</scope>
    <source>
        <strain>LGP32</strain>
    </source>
</reference>
<accession>B7VNJ2</accession>
<dbReference type="EMBL" id="FM954972">
    <property type="protein sequence ID" value="CAV18568.1"/>
    <property type="molecule type" value="Genomic_DNA"/>
</dbReference>
<dbReference type="SMR" id="B7VNJ2"/>
<dbReference type="STRING" id="575788.VS_1405"/>
<dbReference type="KEGG" id="vsp:VS_1405"/>
<dbReference type="eggNOG" id="COG1666">
    <property type="taxonomic scope" value="Bacteria"/>
</dbReference>
<dbReference type="HOGENOM" id="CLU_099839_1_0_6"/>
<dbReference type="Proteomes" id="UP000009100">
    <property type="component" value="Chromosome 1"/>
</dbReference>
<dbReference type="GO" id="GO:0005829">
    <property type="term" value="C:cytosol"/>
    <property type="evidence" value="ECO:0007669"/>
    <property type="project" value="TreeGrafter"/>
</dbReference>
<dbReference type="GO" id="GO:0000166">
    <property type="term" value="F:nucleotide binding"/>
    <property type="evidence" value="ECO:0007669"/>
    <property type="project" value="TreeGrafter"/>
</dbReference>
<dbReference type="CDD" id="cd11740">
    <property type="entry name" value="YajQ_like"/>
    <property type="match status" value="1"/>
</dbReference>
<dbReference type="FunFam" id="3.30.70.860:FF:000001">
    <property type="entry name" value="UPF0234 protein YajQ"/>
    <property type="match status" value="1"/>
</dbReference>
<dbReference type="Gene3D" id="3.30.70.860">
    <property type="match status" value="1"/>
</dbReference>
<dbReference type="Gene3D" id="3.30.70.990">
    <property type="entry name" value="YajQ-like, domain 2"/>
    <property type="match status" value="1"/>
</dbReference>
<dbReference type="HAMAP" id="MF_00632">
    <property type="entry name" value="YajQ"/>
    <property type="match status" value="1"/>
</dbReference>
<dbReference type="InterPro" id="IPR007551">
    <property type="entry name" value="DUF520"/>
</dbReference>
<dbReference type="InterPro" id="IPR035571">
    <property type="entry name" value="UPF0234-like_C"/>
</dbReference>
<dbReference type="InterPro" id="IPR035570">
    <property type="entry name" value="UPF0234_N"/>
</dbReference>
<dbReference type="InterPro" id="IPR036183">
    <property type="entry name" value="YajQ-like_sf"/>
</dbReference>
<dbReference type="NCBIfam" id="NF003819">
    <property type="entry name" value="PRK05412.1"/>
    <property type="match status" value="1"/>
</dbReference>
<dbReference type="PANTHER" id="PTHR30476">
    <property type="entry name" value="UPF0234 PROTEIN YAJQ"/>
    <property type="match status" value="1"/>
</dbReference>
<dbReference type="PANTHER" id="PTHR30476:SF0">
    <property type="entry name" value="UPF0234 PROTEIN YAJQ"/>
    <property type="match status" value="1"/>
</dbReference>
<dbReference type="Pfam" id="PF04461">
    <property type="entry name" value="DUF520"/>
    <property type="match status" value="1"/>
</dbReference>
<dbReference type="SUPFAM" id="SSF89963">
    <property type="entry name" value="YajQ-like"/>
    <property type="match status" value="2"/>
</dbReference>
<feature type="chain" id="PRO_1000147333" description="Nucleotide-binding protein VS_1405">
    <location>
        <begin position="1"/>
        <end position="160"/>
    </location>
</feature>
<organism>
    <name type="scientific">Vibrio atlanticus (strain LGP32)</name>
    <name type="common">Vibrio splendidus (strain Mel32)</name>
    <dbReference type="NCBI Taxonomy" id="575788"/>
    <lineage>
        <taxon>Bacteria</taxon>
        <taxon>Pseudomonadati</taxon>
        <taxon>Pseudomonadota</taxon>
        <taxon>Gammaproteobacteria</taxon>
        <taxon>Vibrionales</taxon>
        <taxon>Vibrionaceae</taxon>
        <taxon>Vibrio</taxon>
    </lineage>
</organism>